<geneLocation type="plasmid">
    <name>pSymA</name>
    <name>megaplasmid 1</name>
</geneLocation>
<keyword id="KW-0536">Nodulation</keyword>
<keyword id="KW-0614">Plasmid</keyword>
<keyword id="KW-1185">Reference proteome</keyword>
<gene>
    <name type="primary">nolF</name>
    <name type="ordered locus">RA0481</name>
    <name type="ORF">SMa0876</name>
</gene>
<accession>P25196</accession>
<organism>
    <name type="scientific">Rhizobium meliloti (strain 1021)</name>
    <name type="common">Ensifer meliloti</name>
    <name type="synonym">Sinorhizobium meliloti</name>
    <dbReference type="NCBI Taxonomy" id="266834"/>
    <lineage>
        <taxon>Bacteria</taxon>
        <taxon>Pseudomonadati</taxon>
        <taxon>Pseudomonadota</taxon>
        <taxon>Alphaproteobacteria</taxon>
        <taxon>Hyphomicrobiales</taxon>
        <taxon>Rhizobiaceae</taxon>
        <taxon>Sinorhizobium/Ensifer group</taxon>
        <taxon>Sinorhizobium</taxon>
    </lineage>
</organism>
<comment type="function">
    <text>Involved in the production of Medicago-specific nodulation signal molecule.</text>
</comment>
<comment type="similarity">
    <text evidence="1">Belongs to the membrane fusion protein (MFP) (TC 8.A.1) family.</text>
</comment>
<comment type="sequence caution" evidence="1">
    <conflict type="frameshift">
        <sequence resource="EMBL-CDS" id="CAA41486"/>
    </conflict>
</comment>
<reference key="1">
    <citation type="journal article" date="1991" name="Mol. Gen. Genet.">
        <title>Six nodulation genes of nod box locus 4 in Rhizobium meliloti are involved in nodulation signal production: nodM codes for D-glucosamine synthetase.</title>
        <authorList>
            <person name="Baev N."/>
            <person name="Endre G."/>
            <person name="Petrovics G."/>
            <person name="Banfalvi Z."/>
            <person name="Kondorosi A."/>
        </authorList>
    </citation>
    <scope>NUCLEOTIDE SEQUENCE [GENOMIC DNA]</scope>
    <source>
        <strain>AK631</strain>
    </source>
</reference>
<reference key="2">
    <citation type="journal article" date="2001" name="Proc. Natl. Acad. Sci. U.S.A.">
        <title>Nucleotide sequence and predicted functions of the entire Sinorhizobium meliloti pSymA megaplasmid.</title>
        <authorList>
            <person name="Barnett M.J."/>
            <person name="Fisher R.F."/>
            <person name="Jones T."/>
            <person name="Komp C."/>
            <person name="Abola A.P."/>
            <person name="Barloy-Hubler F."/>
            <person name="Bowser L."/>
            <person name="Capela D."/>
            <person name="Galibert F."/>
            <person name="Gouzy J."/>
            <person name="Gurjal M."/>
            <person name="Hong A."/>
            <person name="Huizar L."/>
            <person name="Hyman R.W."/>
            <person name="Kahn D."/>
            <person name="Kahn M.L."/>
            <person name="Kalman S."/>
            <person name="Keating D.H."/>
            <person name="Palm C."/>
            <person name="Peck M.C."/>
            <person name="Surzycki R."/>
            <person name="Wells D.H."/>
            <person name="Yeh K.-C."/>
            <person name="Davis R.W."/>
            <person name="Federspiel N.A."/>
            <person name="Long S.R."/>
        </authorList>
    </citation>
    <scope>NUCLEOTIDE SEQUENCE [LARGE SCALE GENOMIC DNA]</scope>
    <source>
        <strain>1021</strain>
    </source>
</reference>
<reference key="3">
    <citation type="journal article" date="2001" name="Science">
        <title>The composite genome of the legume symbiont Sinorhizobium meliloti.</title>
        <authorList>
            <person name="Galibert F."/>
            <person name="Finan T.M."/>
            <person name="Long S.R."/>
            <person name="Puehler A."/>
            <person name="Abola P."/>
            <person name="Ampe F."/>
            <person name="Barloy-Hubler F."/>
            <person name="Barnett M.J."/>
            <person name="Becker A."/>
            <person name="Boistard P."/>
            <person name="Bothe G."/>
            <person name="Boutry M."/>
            <person name="Bowser L."/>
            <person name="Buhrmester J."/>
            <person name="Cadieu E."/>
            <person name="Capela D."/>
            <person name="Chain P."/>
            <person name="Cowie A."/>
            <person name="Davis R.W."/>
            <person name="Dreano S."/>
            <person name="Federspiel N.A."/>
            <person name="Fisher R.F."/>
            <person name="Gloux S."/>
            <person name="Godrie T."/>
            <person name="Goffeau A."/>
            <person name="Golding B."/>
            <person name="Gouzy J."/>
            <person name="Gurjal M."/>
            <person name="Hernandez-Lucas I."/>
            <person name="Hong A."/>
            <person name="Huizar L."/>
            <person name="Hyman R.W."/>
            <person name="Jones T."/>
            <person name="Kahn D."/>
            <person name="Kahn M.L."/>
            <person name="Kalman S."/>
            <person name="Keating D.H."/>
            <person name="Kiss E."/>
            <person name="Komp C."/>
            <person name="Lelaure V."/>
            <person name="Masuy D."/>
            <person name="Palm C."/>
            <person name="Peck M.C."/>
            <person name="Pohl T.M."/>
            <person name="Portetelle D."/>
            <person name="Purnelle B."/>
            <person name="Ramsperger U."/>
            <person name="Surzycki R."/>
            <person name="Thebault P."/>
            <person name="Vandenbol M."/>
            <person name="Vorhoelter F.J."/>
            <person name="Weidner S."/>
            <person name="Wells D.H."/>
            <person name="Wong K."/>
            <person name="Yeh K.-C."/>
            <person name="Batut J."/>
        </authorList>
    </citation>
    <scope>NUCLEOTIDE SEQUENCE [LARGE SCALE GENOMIC DNA]</scope>
    <source>
        <strain>1021</strain>
    </source>
</reference>
<feature type="chain" id="PRO_0000201889" description="Nodulation protein NolF">
    <location>
        <begin position="1"/>
        <end position="367"/>
    </location>
</feature>
<feature type="sequence conflict" description="In Ref. 1; CAA41486." evidence="1" ref="1">
    <original>L</original>
    <variation>V</variation>
    <location>
        <position position="9"/>
    </location>
</feature>
<feature type="sequence conflict" description="In Ref. 1; CAA41486." evidence="1" ref="1">
    <original>K</original>
    <variation>E</variation>
    <location>
        <position position="43"/>
    </location>
</feature>
<feature type="sequence conflict" description="In Ref. 1." evidence="1" ref="1">
    <original>E</original>
    <variation>D</variation>
    <location>
        <position position="82"/>
    </location>
</feature>
<feature type="sequence conflict" description="In Ref. 1; CAA41486." evidence="1" ref="1">
    <original>QL</original>
    <variation>HV</variation>
    <location>
        <begin position="160"/>
        <end position="161"/>
    </location>
</feature>
<feature type="sequence conflict" description="In Ref. 1; CAA41486." evidence="1" ref="1">
    <original>A</original>
    <variation>R</variation>
    <location>
        <position position="189"/>
    </location>
</feature>
<feature type="sequence conflict" description="In Ref. 1; CAA41486." evidence="1" ref="1">
    <original>T</original>
    <variation>M</variation>
    <location>
        <position position="237"/>
    </location>
</feature>
<feature type="sequence conflict" description="In Ref. 1; CAA41486." evidence="1" ref="1">
    <original>A</original>
    <variation>T</variation>
    <location>
        <position position="301"/>
    </location>
</feature>
<feature type="sequence conflict" description="In Ref. 1; CAA41486." evidence="1" ref="1">
    <original>V</original>
    <variation>A</variation>
    <location>
        <position position="358"/>
    </location>
</feature>
<feature type="sequence conflict" description="In Ref. 1; CAA41486." evidence="1" ref="1">
    <original>II</original>
    <variation>YY</variation>
    <location>
        <begin position="363"/>
        <end position="364"/>
    </location>
</feature>
<name>NOLF_RHIME</name>
<protein>
    <recommendedName>
        <fullName>Nodulation protein NolF</fullName>
    </recommendedName>
</protein>
<proteinExistence type="inferred from homology"/>
<evidence type="ECO:0000305" key="1"/>
<sequence length="367" mass="39032">MTISAQCNLQKLAFATTLAVTIVLSQGRAIGQVKHGSPIELAKADVSTAVRQDMANEVRIVGSLTPIRRSTLTSRVSSTIIELPVQIGDVVNAGDLLVRFERGALESAVTGRKAEADALSAQTELAEAVLERNTRLGERGAASEATRLAALADVLDLRAQLRSKQAEVSDAERSLSHAEVRAEFGGVIAARSVEEGQTVPLNTQLMTIVELNRLEVDAGVPTSRIPLIRLKQSVELTVEGFPGRTFSGEVARISPTADAGSRAVRVFIAVDNEEGLLRGGMFTIGDLRVDDQKDVIALPAASIRHDADGFFVLKVEAGVLQRRPVGLGRSWSDRDLVQVSGVSEGDVIVTAPLPDLVVNTPVIIEGI</sequence>
<dbReference type="EMBL" id="X58632">
    <property type="protein sequence ID" value="CAA41486.1"/>
    <property type="status" value="ALT_FRAME"/>
    <property type="molecule type" value="Genomic_DNA"/>
</dbReference>
<dbReference type="EMBL" id="AE006469">
    <property type="protein sequence ID" value="AAK65139.1"/>
    <property type="molecule type" value="Genomic_DNA"/>
</dbReference>
<dbReference type="PIR" id="A95322">
    <property type="entry name" value="A95322"/>
</dbReference>
<dbReference type="PIR" id="S16562">
    <property type="entry name" value="S16562"/>
</dbReference>
<dbReference type="RefSeq" id="NP_435727.1">
    <property type="nucleotide sequence ID" value="NC_003037.1"/>
</dbReference>
<dbReference type="RefSeq" id="WP_010967461.1">
    <property type="nucleotide sequence ID" value="NC_003037.1"/>
</dbReference>
<dbReference type="SMR" id="P25196"/>
<dbReference type="EnsemblBacteria" id="AAK65139">
    <property type="protein sequence ID" value="AAK65139"/>
    <property type="gene ID" value="SMa0876"/>
</dbReference>
<dbReference type="KEGG" id="sme:SMa0876"/>
<dbReference type="PATRIC" id="fig|266834.11.peg.491"/>
<dbReference type="HOGENOM" id="CLU_018816_1_2_5"/>
<dbReference type="OrthoDB" id="9806939at2"/>
<dbReference type="Proteomes" id="UP000001976">
    <property type="component" value="Plasmid pSymA"/>
</dbReference>
<dbReference type="GO" id="GO:1990281">
    <property type="term" value="C:efflux pump complex"/>
    <property type="evidence" value="ECO:0007669"/>
    <property type="project" value="TreeGrafter"/>
</dbReference>
<dbReference type="GO" id="GO:0015562">
    <property type="term" value="F:efflux transmembrane transporter activity"/>
    <property type="evidence" value="ECO:0007669"/>
    <property type="project" value="TreeGrafter"/>
</dbReference>
<dbReference type="FunFam" id="2.40.30.170:FF:000010">
    <property type="entry name" value="Efflux RND transporter periplasmic adaptor subunit"/>
    <property type="match status" value="1"/>
</dbReference>
<dbReference type="Gene3D" id="2.40.30.170">
    <property type="match status" value="1"/>
</dbReference>
<dbReference type="Gene3D" id="2.40.420.20">
    <property type="match status" value="1"/>
</dbReference>
<dbReference type="Gene3D" id="2.40.50.100">
    <property type="match status" value="1"/>
</dbReference>
<dbReference type="Gene3D" id="1.10.287.470">
    <property type="entry name" value="Helix hairpin bin"/>
    <property type="match status" value="1"/>
</dbReference>
<dbReference type="InterPro" id="IPR032317">
    <property type="entry name" value="CusB_D23"/>
</dbReference>
<dbReference type="InterPro" id="IPR006143">
    <property type="entry name" value="RND_pump_MFP"/>
</dbReference>
<dbReference type="NCBIfam" id="TIGR01730">
    <property type="entry name" value="RND_mfp"/>
    <property type="match status" value="1"/>
</dbReference>
<dbReference type="PANTHER" id="PTHR30469">
    <property type="entry name" value="MULTIDRUG RESISTANCE PROTEIN MDTA"/>
    <property type="match status" value="1"/>
</dbReference>
<dbReference type="Pfam" id="PF16576">
    <property type="entry name" value="HlyD_D23"/>
    <property type="match status" value="1"/>
</dbReference>
<dbReference type="SUPFAM" id="SSF111369">
    <property type="entry name" value="HlyD-like secretion proteins"/>
    <property type="match status" value="1"/>
</dbReference>